<comment type="function">
    <text evidence="1 4">Component of the general transcription and DNA repair factor IIH (TFIIH) core complex, which is involved in general and transcription-coupled nucleotide excision repair (NER) of damaged DNA and, when complexed to CAK, in RNA transcription by RNA polymerase II. In NER, TFIIH acts by opening DNA around the lesion to allow the excision of the damaged oligonucleotide and its replacement by a new DNA fragment. In transcription, TFIIH has an essential role in transcription initiation. When the pre-initiation complex (PIC) has been established, TFIIH is required for promoter opening and promoter escape. Phosphorylation of the C-terminal tail (CTD) of the largest subunit of RNA polymerase II by the kinase module CAK controls the initiation of transcription.</text>
</comment>
<comment type="function">
    <text evidence="2">Stimulates the ATPase activity of TFIIH subunit XPB/ERCC3 (PubMed:17466626).</text>
</comment>
<comment type="subunit">
    <text evidence="1 3 4">Component of the 7-subunit TFIIH core complex composed of XPB/ERCC3, XPD/ERCC2, GTF2H1, GTF2H2, GTF2H3, GTF2H4 and GTF2H5, which is active in NER. The core complex associates with the 3-subunit CDK-activating kinase (CAK) module composed of CCNH/cyclin H, CDK7 and MNAT1 to form the 10-subunit holoenzyme (holo-TFIIH) active in transcription (PubMed:9852112). Part of TBP-based Pol II pre-initiation complex (PIC), in which Pol II core assembles with general transcription factors and other specific initiation factors including GTF2E1, GTF2E2, GTF2F1, GTF2F2, TCEA1, ERCC2, ERCC3, GTF2H2, GTF2H3, GTF2H4, GTF2H5, GTF2A1, GTF2A2, GTF2B and TBP; this large multi-subunit PIC complex mediates DNA unwinding and targets Pol II core to the transcription start site where the first phosphodiester bond forms (PubMed:27193682).</text>
</comment>
<comment type="interaction">
    <interactant intactId="EBI-6380495">
        <id>Q92759</id>
    </interactant>
    <interactant intactId="EBI-769261">
        <id>Q96JC9</id>
        <label>EAF1</label>
    </interactant>
    <organismsDiffer>false</organismsDiffer>
    <experiments>3</experiments>
</comment>
<comment type="interaction">
    <interactant intactId="EBI-6380495">
        <id>Q92759</id>
    </interactant>
    <interactant intactId="EBI-750700">
        <id>Q8N9N8</id>
        <label>EIF1AD</label>
    </interactant>
    <organismsDiffer>false</organismsDiffer>
    <experiments>3</experiments>
</comment>
<comment type="interaction">
    <interactant intactId="EBI-6380495">
        <id>Q92759</id>
    </interactant>
    <interactant intactId="EBI-6380438">
        <id>Q6ZYL4</id>
        <label>GTF2H5</label>
    </interactant>
    <organismsDiffer>false</organismsDiffer>
    <experiments>12</experiments>
</comment>
<comment type="interaction">
    <interactant intactId="EBI-6380495">
        <id>Q92759</id>
    </interactant>
    <interactant intactId="EBI-10268630">
        <id>Q8N9Q2</id>
        <label>SREK1IP1</label>
    </interactant>
    <organismsDiffer>false</organismsDiffer>
    <experiments>3</experiments>
</comment>
<comment type="interaction">
    <interactant intactId="EBI-6380495">
        <id>Q92759</id>
    </interactant>
    <interactant intactId="EBI-17438286">
        <id>Q8WTV1</id>
        <label>THAP3</label>
    </interactant>
    <organismsDiffer>false</organismsDiffer>
    <experiments>3</experiments>
</comment>
<comment type="subcellular location">
    <subcellularLocation>
        <location>Nucleus</location>
    </subcellularLocation>
</comment>
<comment type="alternative products">
    <event type="alternative splicing"/>
    <isoform>
        <id>Q92759-1</id>
        <name>1</name>
        <sequence type="displayed"/>
    </isoform>
    <isoform>
        <id>Q92759-2</id>
        <name>2</name>
        <sequence type="described" ref="VSP_056835 VSP_056836 VSP_056837"/>
    </isoform>
</comment>
<comment type="domain">
    <text evidence="2">The C-terminus (residues 305-462) stimulates the ATPase activity of XPB/ERCC3 (PubMed:17466626).</text>
</comment>
<comment type="similarity">
    <text evidence="7">Belongs to the TFB2 family.</text>
</comment>
<keyword id="KW-0002">3D-structure</keyword>
<keyword id="KW-0025">Alternative splicing</keyword>
<keyword id="KW-0227">DNA damage</keyword>
<keyword id="KW-0234">DNA repair</keyword>
<keyword id="KW-0539">Nucleus</keyword>
<keyword id="KW-1267">Proteomics identification</keyword>
<keyword id="KW-1185">Reference proteome</keyword>
<keyword id="KW-0804">Transcription</keyword>
<keyword id="KW-0805">Transcription regulation</keyword>
<name>TF2H4_HUMAN</name>
<feature type="chain" id="PRO_0000119253" description="General transcription factor IIH subunit 4">
    <location>
        <begin position="1"/>
        <end position="462"/>
    </location>
</feature>
<feature type="splice variant" id="VSP_056835" description="In isoform 2." evidence="6">
    <location>
        <begin position="1"/>
        <end position="56"/>
    </location>
</feature>
<feature type="splice variant" id="VSP_056836" description="In isoform 2." evidence="6">
    <original>R</original>
    <variation>V</variation>
    <location>
        <position position="276"/>
    </location>
</feature>
<feature type="splice variant" id="VSP_056837" description="In isoform 2." evidence="6">
    <location>
        <begin position="277"/>
        <end position="462"/>
    </location>
</feature>
<feature type="sequence variant" id="VAR_019056" description="In dbSNP:rs3218820." evidence="5">
    <original>R</original>
    <variation>Q</variation>
    <location>
        <position position="337"/>
    </location>
</feature>
<feature type="helix" evidence="17">
    <location>
        <begin position="19"/>
        <end position="24"/>
    </location>
</feature>
<feature type="helix" evidence="17">
    <location>
        <begin position="28"/>
        <end position="34"/>
    </location>
</feature>
<feature type="helix" evidence="17">
    <location>
        <begin position="38"/>
        <end position="47"/>
    </location>
</feature>
<feature type="helix" evidence="17">
    <location>
        <begin position="50"/>
        <end position="58"/>
    </location>
</feature>
<feature type="turn" evidence="17">
    <location>
        <begin position="59"/>
        <end position="61"/>
    </location>
</feature>
<feature type="helix" evidence="17">
    <location>
        <begin position="68"/>
        <end position="72"/>
    </location>
</feature>
<feature type="strand" evidence="15">
    <location>
        <begin position="73"/>
        <end position="75"/>
    </location>
</feature>
<feature type="helix" evidence="17">
    <location>
        <begin position="80"/>
        <end position="92"/>
    </location>
</feature>
<feature type="strand" evidence="17">
    <location>
        <begin position="95"/>
        <end position="100"/>
    </location>
</feature>
<feature type="strand" evidence="17">
    <location>
        <begin position="106"/>
        <end position="110"/>
    </location>
</feature>
<feature type="helix" evidence="17">
    <location>
        <begin position="112"/>
        <end position="122"/>
    </location>
</feature>
<feature type="strand" evidence="17">
    <location>
        <begin position="133"/>
        <end position="136"/>
    </location>
</feature>
<feature type="helix" evidence="16">
    <location>
        <begin position="146"/>
        <end position="163"/>
    </location>
</feature>
<feature type="strand" evidence="16">
    <location>
        <begin position="167"/>
        <end position="169"/>
    </location>
</feature>
<feature type="helix" evidence="16">
    <location>
        <begin position="173"/>
        <end position="180"/>
    </location>
</feature>
<feature type="turn" evidence="16">
    <location>
        <begin position="181"/>
        <end position="184"/>
    </location>
</feature>
<feature type="strand" evidence="16">
    <location>
        <begin position="190"/>
        <end position="192"/>
    </location>
</feature>
<feature type="helix" evidence="16">
    <location>
        <begin position="198"/>
        <end position="205"/>
    </location>
</feature>
<feature type="helix" evidence="16">
    <location>
        <begin position="208"/>
        <end position="226"/>
    </location>
</feature>
<feature type="helix" evidence="16">
    <location>
        <begin position="230"/>
        <end position="241"/>
    </location>
</feature>
<feature type="helix" evidence="16">
    <location>
        <begin position="256"/>
        <end position="267"/>
    </location>
</feature>
<feature type="strand" evidence="16">
    <location>
        <begin position="270"/>
        <end position="272"/>
    </location>
</feature>
<feature type="strand" evidence="16">
    <location>
        <begin position="274"/>
        <end position="277"/>
    </location>
</feature>
<feature type="strand" evidence="17">
    <location>
        <begin position="279"/>
        <end position="283"/>
    </location>
</feature>
<feature type="helix" evidence="16">
    <location>
        <begin position="285"/>
        <end position="288"/>
    </location>
</feature>
<feature type="strand" evidence="16">
    <location>
        <begin position="307"/>
        <end position="309"/>
    </location>
</feature>
<feature type="strand" evidence="16">
    <location>
        <begin position="313"/>
        <end position="317"/>
    </location>
</feature>
<feature type="helix" evidence="16">
    <location>
        <begin position="322"/>
        <end position="330"/>
    </location>
</feature>
<feature type="strand" evidence="16">
    <location>
        <begin position="331"/>
        <end position="338"/>
    </location>
</feature>
<feature type="strand" evidence="16">
    <location>
        <begin position="341"/>
        <end position="345"/>
    </location>
</feature>
<feature type="helix" evidence="16">
    <location>
        <begin position="348"/>
        <end position="357"/>
    </location>
</feature>
<feature type="helix" evidence="16">
    <location>
        <begin position="361"/>
        <end position="370"/>
    </location>
</feature>
<feature type="helix" evidence="16">
    <location>
        <begin position="374"/>
        <end position="378"/>
    </location>
</feature>
<feature type="strand" evidence="16">
    <location>
        <begin position="379"/>
        <end position="383"/>
    </location>
</feature>
<feature type="helix" evidence="16">
    <location>
        <begin position="385"/>
        <end position="398"/>
    </location>
</feature>
<feature type="strand" evidence="16">
    <location>
        <begin position="400"/>
        <end position="409"/>
    </location>
</feature>
<feature type="helix" evidence="16">
    <location>
        <begin position="415"/>
        <end position="428"/>
    </location>
</feature>
<feature type="strand" evidence="16">
    <location>
        <begin position="431"/>
        <end position="435"/>
    </location>
</feature>
<feature type="turn" evidence="16">
    <location>
        <begin position="436"/>
        <end position="439"/>
    </location>
</feature>
<feature type="strand" evidence="16">
    <location>
        <begin position="440"/>
        <end position="443"/>
    </location>
</feature>
<feature type="helix" evidence="16">
    <location>
        <begin position="445"/>
        <end position="447"/>
    </location>
</feature>
<feature type="helix" evidence="16">
    <location>
        <begin position="448"/>
        <end position="457"/>
    </location>
</feature>
<reference key="1">
    <citation type="journal article" date="1997" name="EMBO J.">
        <title>Cloning and characterization of p52, the fifth subunit of the core of the transcription/DNA repair factor TFIIH.</title>
        <authorList>
            <person name="Marinoni J.-C."/>
            <person name="Roy R."/>
            <person name="Vermeulen W."/>
            <person name="Miniou P."/>
            <person name="Lutz Y."/>
            <person name="Weeda G."/>
            <person name="Seroz T."/>
            <person name="Molina Gomez D."/>
            <person name="Hoeijmakers J.H.J."/>
            <person name="Egly J.-M."/>
        </authorList>
    </citation>
    <scope>NUCLEOTIDE SEQUENCE [MRNA] (ISOFORM 1)</scope>
    <source>
        <tissue>Pre-B cell</tissue>
    </source>
</reference>
<reference key="2">
    <citation type="submission" date="1999-09" db="EMBL/GenBank/DDBJ databases">
        <title>Homo sapiens 2,229,817bp genomic DNA of 6p21.3 HLA class I region.</title>
        <authorList>
            <person name="Shiina S."/>
            <person name="Tamiya G."/>
            <person name="Oka A."/>
            <person name="Inoko H."/>
        </authorList>
    </citation>
    <scope>NUCLEOTIDE SEQUENCE [LARGE SCALE GENOMIC DNA]</scope>
</reference>
<reference key="3">
    <citation type="submission" date="2003-05" db="EMBL/GenBank/DDBJ databases">
        <title>Cloning of human full-length CDSs in BD Creator(TM) system donor vector.</title>
        <authorList>
            <person name="Kalnine N."/>
            <person name="Chen X."/>
            <person name="Rolfs A."/>
            <person name="Halleck A."/>
            <person name="Hines L."/>
            <person name="Eisenstein S."/>
            <person name="Koundinya M."/>
            <person name="Raphael J."/>
            <person name="Moreira D."/>
            <person name="Kelley T."/>
            <person name="LaBaer J."/>
            <person name="Lin Y."/>
            <person name="Phelan M."/>
            <person name="Farmer A."/>
        </authorList>
    </citation>
    <scope>NUCLEOTIDE SEQUENCE [LARGE SCALE MRNA] (ISOFORM 1)</scope>
</reference>
<reference key="4">
    <citation type="submission" date="2002-06" db="EMBL/GenBank/DDBJ databases">
        <authorList>
            <consortium name="NIEHS SNPs program"/>
        </authorList>
    </citation>
    <scope>NUCLEOTIDE SEQUENCE [GENOMIC DNA]</scope>
    <scope>VARIANT GLN-337</scope>
</reference>
<reference key="5">
    <citation type="journal article" date="2004" name="Nat. Genet.">
        <title>Complete sequencing and characterization of 21,243 full-length human cDNAs.</title>
        <authorList>
            <person name="Ota T."/>
            <person name="Suzuki Y."/>
            <person name="Nishikawa T."/>
            <person name="Otsuki T."/>
            <person name="Sugiyama T."/>
            <person name="Irie R."/>
            <person name="Wakamatsu A."/>
            <person name="Hayashi K."/>
            <person name="Sato H."/>
            <person name="Nagai K."/>
            <person name="Kimura K."/>
            <person name="Makita H."/>
            <person name="Sekine M."/>
            <person name="Obayashi M."/>
            <person name="Nishi T."/>
            <person name="Shibahara T."/>
            <person name="Tanaka T."/>
            <person name="Ishii S."/>
            <person name="Yamamoto J."/>
            <person name="Saito K."/>
            <person name="Kawai Y."/>
            <person name="Isono Y."/>
            <person name="Nakamura Y."/>
            <person name="Nagahari K."/>
            <person name="Murakami K."/>
            <person name="Yasuda T."/>
            <person name="Iwayanagi T."/>
            <person name="Wagatsuma M."/>
            <person name="Shiratori A."/>
            <person name="Sudo H."/>
            <person name="Hosoiri T."/>
            <person name="Kaku Y."/>
            <person name="Kodaira H."/>
            <person name="Kondo H."/>
            <person name="Sugawara M."/>
            <person name="Takahashi M."/>
            <person name="Kanda K."/>
            <person name="Yokoi T."/>
            <person name="Furuya T."/>
            <person name="Kikkawa E."/>
            <person name="Omura Y."/>
            <person name="Abe K."/>
            <person name="Kamihara K."/>
            <person name="Katsuta N."/>
            <person name="Sato K."/>
            <person name="Tanikawa M."/>
            <person name="Yamazaki M."/>
            <person name="Ninomiya K."/>
            <person name="Ishibashi T."/>
            <person name="Yamashita H."/>
            <person name="Murakawa K."/>
            <person name="Fujimori K."/>
            <person name="Tanai H."/>
            <person name="Kimata M."/>
            <person name="Watanabe M."/>
            <person name="Hiraoka S."/>
            <person name="Chiba Y."/>
            <person name="Ishida S."/>
            <person name="Ono Y."/>
            <person name="Takiguchi S."/>
            <person name="Watanabe S."/>
            <person name="Yosida M."/>
            <person name="Hotuta T."/>
            <person name="Kusano J."/>
            <person name="Kanehori K."/>
            <person name="Takahashi-Fujii A."/>
            <person name="Hara H."/>
            <person name="Tanase T.-O."/>
            <person name="Nomura Y."/>
            <person name="Togiya S."/>
            <person name="Komai F."/>
            <person name="Hara R."/>
            <person name="Takeuchi K."/>
            <person name="Arita M."/>
            <person name="Imose N."/>
            <person name="Musashino K."/>
            <person name="Yuuki H."/>
            <person name="Oshima A."/>
            <person name="Sasaki N."/>
            <person name="Aotsuka S."/>
            <person name="Yoshikawa Y."/>
            <person name="Matsunawa H."/>
            <person name="Ichihara T."/>
            <person name="Shiohata N."/>
            <person name="Sano S."/>
            <person name="Moriya S."/>
            <person name="Momiyama H."/>
            <person name="Satoh N."/>
            <person name="Takami S."/>
            <person name="Terashima Y."/>
            <person name="Suzuki O."/>
            <person name="Nakagawa S."/>
            <person name="Senoh A."/>
            <person name="Mizoguchi H."/>
            <person name="Goto Y."/>
            <person name="Shimizu F."/>
            <person name="Wakebe H."/>
            <person name="Hishigaki H."/>
            <person name="Watanabe T."/>
            <person name="Sugiyama A."/>
            <person name="Takemoto M."/>
            <person name="Kawakami B."/>
            <person name="Yamazaki M."/>
            <person name="Watanabe K."/>
            <person name="Kumagai A."/>
            <person name="Itakura S."/>
            <person name="Fukuzumi Y."/>
            <person name="Fujimori Y."/>
            <person name="Komiyama M."/>
            <person name="Tashiro H."/>
            <person name="Tanigami A."/>
            <person name="Fujiwara T."/>
            <person name="Ono T."/>
            <person name="Yamada K."/>
            <person name="Fujii Y."/>
            <person name="Ozaki K."/>
            <person name="Hirao M."/>
            <person name="Ohmori Y."/>
            <person name="Kawabata A."/>
            <person name="Hikiji T."/>
            <person name="Kobatake N."/>
            <person name="Inagaki H."/>
            <person name="Ikema Y."/>
            <person name="Okamoto S."/>
            <person name="Okitani R."/>
            <person name="Kawakami T."/>
            <person name="Noguchi S."/>
            <person name="Itoh T."/>
            <person name="Shigeta K."/>
            <person name="Senba T."/>
            <person name="Matsumura K."/>
            <person name="Nakajima Y."/>
            <person name="Mizuno T."/>
            <person name="Morinaga M."/>
            <person name="Sasaki M."/>
            <person name="Togashi T."/>
            <person name="Oyama M."/>
            <person name="Hata H."/>
            <person name="Watanabe M."/>
            <person name="Komatsu T."/>
            <person name="Mizushima-Sugano J."/>
            <person name="Satoh T."/>
            <person name="Shirai Y."/>
            <person name="Takahashi Y."/>
            <person name="Nakagawa K."/>
            <person name="Okumura K."/>
            <person name="Nagase T."/>
            <person name="Nomura N."/>
            <person name="Kikuchi H."/>
            <person name="Masuho Y."/>
            <person name="Yamashita R."/>
            <person name="Nakai K."/>
            <person name="Yada T."/>
            <person name="Nakamura Y."/>
            <person name="Ohara O."/>
            <person name="Isogai T."/>
            <person name="Sugano S."/>
        </authorList>
    </citation>
    <scope>NUCLEOTIDE SEQUENCE [LARGE SCALE MRNA] (ISOFORM 2)</scope>
    <source>
        <tissue>Placenta</tissue>
    </source>
</reference>
<reference key="6">
    <citation type="journal article" date="2006" name="Genetics">
        <title>Rapid evolution of major histocompatibility complex class I genes in primates generates new disease alleles in humans via hitchhiking diversity.</title>
        <authorList>
            <person name="Shiina T."/>
            <person name="Ota M."/>
            <person name="Shimizu S."/>
            <person name="Katsuyama Y."/>
            <person name="Hashimoto N."/>
            <person name="Takasu M."/>
            <person name="Anzai T."/>
            <person name="Kulski J.K."/>
            <person name="Kikkawa E."/>
            <person name="Naruse T."/>
            <person name="Kimura N."/>
            <person name="Yanagiya K."/>
            <person name="Watanabe A."/>
            <person name="Hosomichi K."/>
            <person name="Kohara S."/>
            <person name="Iwamoto C."/>
            <person name="Umehara Y."/>
            <person name="Meyer A."/>
            <person name="Wanner V."/>
            <person name="Sano K."/>
            <person name="Macquin C."/>
            <person name="Ikeo K."/>
            <person name="Tokunaga K."/>
            <person name="Gojobori T."/>
            <person name="Inoko H."/>
            <person name="Bahram S."/>
        </authorList>
    </citation>
    <scope>NUCLEOTIDE SEQUENCE [LARGE SCALE GENOMIC DNA]</scope>
    <source>
        <tissue>Peripheral blood leukocyte</tissue>
    </source>
</reference>
<reference key="7">
    <citation type="journal article" date="2003" name="Nature">
        <title>The DNA sequence and analysis of human chromosome 6.</title>
        <authorList>
            <person name="Mungall A.J."/>
            <person name="Palmer S.A."/>
            <person name="Sims S.K."/>
            <person name="Edwards C.A."/>
            <person name="Ashurst J.L."/>
            <person name="Wilming L."/>
            <person name="Jones M.C."/>
            <person name="Horton R."/>
            <person name="Hunt S.E."/>
            <person name="Scott C.E."/>
            <person name="Gilbert J.G.R."/>
            <person name="Clamp M.E."/>
            <person name="Bethel G."/>
            <person name="Milne S."/>
            <person name="Ainscough R."/>
            <person name="Almeida J.P."/>
            <person name="Ambrose K.D."/>
            <person name="Andrews T.D."/>
            <person name="Ashwell R.I.S."/>
            <person name="Babbage A.K."/>
            <person name="Bagguley C.L."/>
            <person name="Bailey J."/>
            <person name="Banerjee R."/>
            <person name="Barker D.J."/>
            <person name="Barlow K.F."/>
            <person name="Bates K."/>
            <person name="Beare D.M."/>
            <person name="Beasley H."/>
            <person name="Beasley O."/>
            <person name="Bird C.P."/>
            <person name="Blakey S.E."/>
            <person name="Bray-Allen S."/>
            <person name="Brook J."/>
            <person name="Brown A.J."/>
            <person name="Brown J.Y."/>
            <person name="Burford D.C."/>
            <person name="Burrill W."/>
            <person name="Burton J."/>
            <person name="Carder C."/>
            <person name="Carter N.P."/>
            <person name="Chapman J.C."/>
            <person name="Clark S.Y."/>
            <person name="Clark G."/>
            <person name="Clee C.M."/>
            <person name="Clegg S."/>
            <person name="Cobley V."/>
            <person name="Collier R.E."/>
            <person name="Collins J.E."/>
            <person name="Colman L.K."/>
            <person name="Corby N.R."/>
            <person name="Coville G.J."/>
            <person name="Culley K.M."/>
            <person name="Dhami P."/>
            <person name="Davies J."/>
            <person name="Dunn M."/>
            <person name="Earthrowl M.E."/>
            <person name="Ellington A.E."/>
            <person name="Evans K.A."/>
            <person name="Faulkner L."/>
            <person name="Francis M.D."/>
            <person name="Frankish A."/>
            <person name="Frankland J."/>
            <person name="French L."/>
            <person name="Garner P."/>
            <person name="Garnett J."/>
            <person name="Ghori M.J."/>
            <person name="Gilby L.M."/>
            <person name="Gillson C.J."/>
            <person name="Glithero R.J."/>
            <person name="Grafham D.V."/>
            <person name="Grant M."/>
            <person name="Gribble S."/>
            <person name="Griffiths C."/>
            <person name="Griffiths M.N.D."/>
            <person name="Hall R."/>
            <person name="Halls K.S."/>
            <person name="Hammond S."/>
            <person name="Harley J.L."/>
            <person name="Hart E.A."/>
            <person name="Heath P.D."/>
            <person name="Heathcott R."/>
            <person name="Holmes S.J."/>
            <person name="Howden P.J."/>
            <person name="Howe K.L."/>
            <person name="Howell G.R."/>
            <person name="Huckle E."/>
            <person name="Humphray S.J."/>
            <person name="Humphries M.D."/>
            <person name="Hunt A.R."/>
            <person name="Johnson C.M."/>
            <person name="Joy A.A."/>
            <person name="Kay M."/>
            <person name="Keenan S.J."/>
            <person name="Kimberley A.M."/>
            <person name="King A."/>
            <person name="Laird G.K."/>
            <person name="Langford C."/>
            <person name="Lawlor S."/>
            <person name="Leongamornlert D.A."/>
            <person name="Leversha M."/>
            <person name="Lloyd C.R."/>
            <person name="Lloyd D.M."/>
            <person name="Loveland J.E."/>
            <person name="Lovell J."/>
            <person name="Martin S."/>
            <person name="Mashreghi-Mohammadi M."/>
            <person name="Maslen G.L."/>
            <person name="Matthews L."/>
            <person name="McCann O.T."/>
            <person name="McLaren S.J."/>
            <person name="McLay K."/>
            <person name="McMurray A."/>
            <person name="Moore M.J.F."/>
            <person name="Mullikin J.C."/>
            <person name="Niblett D."/>
            <person name="Nickerson T."/>
            <person name="Novik K.L."/>
            <person name="Oliver K."/>
            <person name="Overton-Larty E.K."/>
            <person name="Parker A."/>
            <person name="Patel R."/>
            <person name="Pearce A.V."/>
            <person name="Peck A.I."/>
            <person name="Phillimore B.J.C.T."/>
            <person name="Phillips S."/>
            <person name="Plumb R.W."/>
            <person name="Porter K.M."/>
            <person name="Ramsey Y."/>
            <person name="Ranby S.A."/>
            <person name="Rice C.M."/>
            <person name="Ross M.T."/>
            <person name="Searle S.M."/>
            <person name="Sehra H.K."/>
            <person name="Sheridan E."/>
            <person name="Skuce C.D."/>
            <person name="Smith S."/>
            <person name="Smith M."/>
            <person name="Spraggon L."/>
            <person name="Squares S.L."/>
            <person name="Steward C.A."/>
            <person name="Sycamore N."/>
            <person name="Tamlyn-Hall G."/>
            <person name="Tester J."/>
            <person name="Theaker A.J."/>
            <person name="Thomas D.W."/>
            <person name="Thorpe A."/>
            <person name="Tracey A."/>
            <person name="Tromans A."/>
            <person name="Tubby B."/>
            <person name="Wall M."/>
            <person name="Wallis J.M."/>
            <person name="West A.P."/>
            <person name="White S.S."/>
            <person name="Whitehead S.L."/>
            <person name="Whittaker H."/>
            <person name="Wild A."/>
            <person name="Willey D.J."/>
            <person name="Wilmer T.E."/>
            <person name="Wood J.M."/>
            <person name="Wray P.W."/>
            <person name="Wyatt J.C."/>
            <person name="Young L."/>
            <person name="Younger R.M."/>
            <person name="Bentley D.R."/>
            <person name="Coulson A."/>
            <person name="Durbin R.M."/>
            <person name="Hubbard T."/>
            <person name="Sulston J.E."/>
            <person name="Dunham I."/>
            <person name="Rogers J."/>
            <person name="Beck S."/>
        </authorList>
    </citation>
    <scope>NUCLEOTIDE SEQUENCE [LARGE SCALE GENOMIC DNA]</scope>
</reference>
<reference key="8">
    <citation type="submission" date="2005-07" db="EMBL/GenBank/DDBJ databases">
        <authorList>
            <person name="Mural R.J."/>
            <person name="Istrail S."/>
            <person name="Sutton G."/>
            <person name="Florea L."/>
            <person name="Halpern A.L."/>
            <person name="Mobarry C.M."/>
            <person name="Lippert R."/>
            <person name="Walenz B."/>
            <person name="Shatkay H."/>
            <person name="Dew I."/>
            <person name="Miller J.R."/>
            <person name="Flanigan M.J."/>
            <person name="Edwards N.J."/>
            <person name="Bolanos R."/>
            <person name="Fasulo D."/>
            <person name="Halldorsson B.V."/>
            <person name="Hannenhalli S."/>
            <person name="Turner R."/>
            <person name="Yooseph S."/>
            <person name="Lu F."/>
            <person name="Nusskern D.R."/>
            <person name="Shue B.C."/>
            <person name="Zheng X.H."/>
            <person name="Zhong F."/>
            <person name="Delcher A.L."/>
            <person name="Huson D.H."/>
            <person name="Kravitz S.A."/>
            <person name="Mouchard L."/>
            <person name="Reinert K."/>
            <person name="Remington K.A."/>
            <person name="Clark A.G."/>
            <person name="Waterman M.S."/>
            <person name="Eichler E.E."/>
            <person name="Adams M.D."/>
            <person name="Hunkapiller M.W."/>
            <person name="Myers E.W."/>
            <person name="Venter J.C."/>
        </authorList>
    </citation>
    <scope>NUCLEOTIDE SEQUENCE [LARGE SCALE GENOMIC DNA]</scope>
</reference>
<reference key="9">
    <citation type="journal article" date="2004" name="Genome Res.">
        <title>The status, quality, and expansion of the NIH full-length cDNA project: the Mammalian Gene Collection (MGC).</title>
        <authorList>
            <consortium name="The MGC Project Team"/>
        </authorList>
    </citation>
    <scope>NUCLEOTIDE SEQUENCE [LARGE SCALE MRNA] (ISOFORM 1)</scope>
    <source>
        <tissue>Skin</tissue>
        <tissue>Uterus</tissue>
    </source>
</reference>
<reference key="10">
    <citation type="journal article" date="1998" name="J. Biol. Chem.">
        <title>Immunoaffinity purification and functional characterization of human transcription factor IIH and RNA polymerase II from clonal cell lines that conditionally express epitope-tagged subunits of the multiprotein complexes.</title>
        <authorList>
            <person name="Kershnar E."/>
            <person name="Wu S.-Y."/>
            <person name="Chiang C.-M."/>
        </authorList>
    </citation>
    <scope>IDENTIFICATION IN THE TFIIH BASAL TRANSCRIPTION FACTOR</scope>
</reference>
<reference key="11">
    <citation type="journal article" date="1999" name="Mol. Cell">
        <title>Reconstitution of the transcription factor TFIIH: assignment of functions for the three enzymatic subunits, XPB, XPD, and cdk7.</title>
        <authorList>
            <person name="Tirode F."/>
            <person name="Busso D."/>
            <person name="Coin F."/>
            <person name="Egly J.-M."/>
        </authorList>
    </citation>
    <scope>FUNCTION</scope>
    <scope>SUBUNIT</scope>
</reference>
<reference key="12">
    <citation type="journal article" date="2007" name="Mol. Cell">
        <title>Distinct roles for the XPB/p52 and XPD/p44 subcomplexes of TFIIH in damaged DNA opening during nucleotide excision repair.</title>
        <authorList>
            <person name="Coin F."/>
            <person name="Oksenych V."/>
            <person name="Egly J.M."/>
        </authorList>
    </citation>
    <scope>FUNCTION IN STIMULATING XPB/ERCC3</scope>
    <scope>DOMAIN</scope>
</reference>
<reference key="13">
    <citation type="journal article" date="2016" name="Nature">
        <title>Near-atomic resolution visualization of human transcription promoter opening.</title>
        <authorList>
            <person name="He Y."/>
            <person name="Yan C."/>
            <person name="Fang J."/>
            <person name="Inouye C."/>
            <person name="Tjian R."/>
            <person name="Ivanov I."/>
            <person name="Nogales E."/>
        </authorList>
    </citation>
    <scope>STRUCTURE BY ELECTRON MICROSCOPY (3.90 ANGSTROMS) OF TRANSCRIPTION PRE-INITIATION COMPLEX</scope>
    <scope>SUBUNIT</scope>
</reference>
<reference evidence="8" key="14">
    <citation type="journal article" date="2019" name="Nat. Commun.">
        <title>Structural basis of TFIIH activation for nucleotide excision repair.</title>
        <authorList>
            <person name="Kokic G."/>
            <person name="Chernev A."/>
            <person name="Tegunov D."/>
            <person name="Dienemann C."/>
            <person name="Urlaub H."/>
            <person name="Cramer P."/>
        </authorList>
    </citation>
    <scope>STRUCTURE BY ELECTRON MICROSCOPY (3.50 ANGSTROMS) OF NUCLEOTIDE EXCISION REPAIR INTERMEDIATE IN COMPLEX WITH XPA AND DNA SUBSTRATE</scope>
</reference>
<reference evidence="9 10 11 12 13 14" key="15">
    <citation type="journal article" date="2021" name="Nature">
        <title>Structures of mammalian RNA polymerase II pre-initiation complexes.</title>
        <authorList>
            <person name="Aibara S."/>
            <person name="Schilbach S."/>
            <person name="Cramer P."/>
        </authorList>
    </citation>
    <scope>STRUCTURE BY ELECTRON MICROSCOPY (2.90 ANGSTROMS) OF PRE-INITIATION COMPLEXES WITH PIG POLYMERASE II</scope>
</reference>
<sequence>MESTPSRGLNRVHLQCRNLQEFLGGLSPGVLDRLYGHPATCLAVFRELPSLAKNWVMRMLFLEQPLPQAAVALWVKKEFSKAQEESTGLLSGLRIWHTQLLPGGLQGLILNPIFRQNLRIALLGGGKAWSDDTSQLGPDKHARDVPSLDKYAEERWEVVLHFMVGSPSAAVSQDLAQLLSQAGLMKSTEPGEPPCITSAGFQFLLLDTPAQLWYFMLQYLQTAQSRGMDLVEILSFLFQLSFSTLGKDYSVEGMSDSLLNFLQHLREFGLVFQRKRKSRRYYPTRLAINLSSGVSGAGGTVHQPGFIVVETNYRLYAYTESELQIALIALFSEMLYRFPNMVVAQVTRESVQQAIASGITAQQIIHFLRTRAHPVMLKQTPVLPPTITDQIRLWELERDRLRFTEGVLYNQFLSQVDFELLLAHARELGVLVFENSAKRLMVVTPAGHSDVKRFWKRQKHSS</sequence>
<proteinExistence type="evidence at protein level"/>
<protein>
    <recommendedName>
        <fullName>General transcription factor IIH subunit 4</fullName>
    </recommendedName>
    <alternativeName>
        <fullName>Basic transcription factor 2 52 kDa subunit</fullName>
        <shortName>BTF2 p52</shortName>
    </alternativeName>
    <alternativeName>
        <fullName>General transcription factor IIH polypeptide 4</fullName>
    </alternativeName>
    <alternativeName>
        <fullName>TFIIH basal transcription factor complex p52 subunit</fullName>
    </alternativeName>
</protein>
<organism>
    <name type="scientific">Homo sapiens</name>
    <name type="common">Human</name>
    <dbReference type="NCBI Taxonomy" id="9606"/>
    <lineage>
        <taxon>Eukaryota</taxon>
        <taxon>Metazoa</taxon>
        <taxon>Chordata</taxon>
        <taxon>Craniata</taxon>
        <taxon>Vertebrata</taxon>
        <taxon>Euteleostomi</taxon>
        <taxon>Mammalia</taxon>
        <taxon>Eutheria</taxon>
        <taxon>Euarchontoglires</taxon>
        <taxon>Primates</taxon>
        <taxon>Haplorrhini</taxon>
        <taxon>Catarrhini</taxon>
        <taxon>Hominidae</taxon>
        <taxon>Homo</taxon>
    </lineage>
</organism>
<accession>Q92759</accession>
<accession>B4DTJ5</accession>
<accession>Q76KU4</accession>
<gene>
    <name type="primary">GTF2H4</name>
</gene>
<evidence type="ECO:0000269" key="1">
    <source>
    </source>
</evidence>
<evidence type="ECO:0000269" key="2">
    <source>
    </source>
</evidence>
<evidence type="ECO:0000269" key="3">
    <source>
    </source>
</evidence>
<evidence type="ECO:0000269" key="4">
    <source>
    </source>
</evidence>
<evidence type="ECO:0000269" key="5">
    <source ref="4"/>
</evidence>
<evidence type="ECO:0000303" key="6">
    <source>
    </source>
</evidence>
<evidence type="ECO:0000305" key="7"/>
<evidence type="ECO:0007744" key="8">
    <source>
        <dbReference type="PDB" id="6RO4"/>
    </source>
</evidence>
<evidence type="ECO:0007744" key="9">
    <source>
        <dbReference type="PDB" id="7NVV"/>
    </source>
</evidence>
<evidence type="ECO:0007744" key="10">
    <source>
        <dbReference type="PDB" id="7NVW"/>
    </source>
</evidence>
<evidence type="ECO:0007744" key="11">
    <source>
        <dbReference type="PDB" id="7NVX"/>
    </source>
</evidence>
<evidence type="ECO:0007744" key="12">
    <source>
        <dbReference type="PDB" id="7NVY"/>
    </source>
</evidence>
<evidence type="ECO:0007744" key="13">
    <source>
        <dbReference type="PDB" id="7NVZ"/>
    </source>
</evidence>
<evidence type="ECO:0007744" key="14">
    <source>
        <dbReference type="PDB" id="7NW0"/>
    </source>
</evidence>
<evidence type="ECO:0007829" key="15">
    <source>
        <dbReference type="PDB" id="7AD8"/>
    </source>
</evidence>
<evidence type="ECO:0007829" key="16">
    <source>
        <dbReference type="PDB" id="7NVV"/>
    </source>
</evidence>
<evidence type="ECO:0007829" key="17">
    <source>
        <dbReference type="PDB" id="8EBU"/>
    </source>
</evidence>
<dbReference type="EMBL" id="Y07595">
    <property type="protein sequence ID" value="CAA68870.1"/>
    <property type="molecule type" value="mRNA"/>
</dbReference>
<dbReference type="EMBL" id="BA000025">
    <property type="protein sequence ID" value="BAB63317.1"/>
    <property type="molecule type" value="Genomic_DNA"/>
</dbReference>
<dbReference type="EMBL" id="BT007321">
    <property type="protein sequence ID" value="AAP35985.1"/>
    <property type="molecule type" value="mRNA"/>
</dbReference>
<dbReference type="EMBL" id="AY124590">
    <property type="protein sequence ID" value="AAM64222.1"/>
    <property type="molecule type" value="Genomic_DNA"/>
</dbReference>
<dbReference type="EMBL" id="AB088103">
    <property type="protein sequence ID" value="BAC54936.1"/>
    <property type="molecule type" value="Genomic_DNA"/>
</dbReference>
<dbReference type="EMBL" id="AB202101">
    <property type="protein sequence ID" value="BAE78622.1"/>
    <property type="molecule type" value="Genomic_DNA"/>
</dbReference>
<dbReference type="EMBL" id="AB103609">
    <property type="protein sequence ID" value="BAF31271.1"/>
    <property type="molecule type" value="Genomic_DNA"/>
</dbReference>
<dbReference type="EMBL" id="AK300239">
    <property type="protein sequence ID" value="BAG62007.1"/>
    <property type="molecule type" value="mRNA"/>
</dbReference>
<dbReference type="EMBL" id="AL662870">
    <property type="status" value="NOT_ANNOTATED_CDS"/>
    <property type="molecule type" value="Genomic_DNA"/>
</dbReference>
<dbReference type="EMBL" id="AL669830">
    <property type="status" value="NOT_ANNOTATED_CDS"/>
    <property type="molecule type" value="Genomic_DNA"/>
</dbReference>
<dbReference type="EMBL" id="AL773541">
    <property type="status" value="NOT_ANNOTATED_CDS"/>
    <property type="molecule type" value="Genomic_DNA"/>
</dbReference>
<dbReference type="EMBL" id="BX927194">
    <property type="status" value="NOT_ANNOTATED_CDS"/>
    <property type="molecule type" value="Genomic_DNA"/>
</dbReference>
<dbReference type="EMBL" id="CR759747">
    <property type="status" value="NOT_ANNOTATED_CDS"/>
    <property type="molecule type" value="Genomic_DNA"/>
</dbReference>
<dbReference type="EMBL" id="CR936875">
    <property type="status" value="NOT_ANNOTATED_CDS"/>
    <property type="molecule type" value="Genomic_DNA"/>
</dbReference>
<dbReference type="EMBL" id="CH471081">
    <property type="protein sequence ID" value="EAX03347.1"/>
    <property type="molecule type" value="Genomic_DNA"/>
</dbReference>
<dbReference type="EMBL" id="BC004935">
    <property type="protein sequence ID" value="AAH04935.1"/>
    <property type="molecule type" value="mRNA"/>
</dbReference>
<dbReference type="EMBL" id="BC016302">
    <property type="protein sequence ID" value="AAH16302.1"/>
    <property type="molecule type" value="mRNA"/>
</dbReference>
<dbReference type="CCDS" id="CCDS34386.1">
    <molecule id="Q92759-1"/>
</dbReference>
<dbReference type="RefSeq" id="NP_001508.1">
    <molecule id="Q92759-1"/>
    <property type="nucleotide sequence ID" value="NM_001517.5"/>
</dbReference>
<dbReference type="PDB" id="5IVW">
    <property type="method" value="EM"/>
    <property type="resolution" value="10.00 A"/>
    <property type="chains" value="2=1-462"/>
</dbReference>
<dbReference type="PDB" id="5IY6">
    <property type="method" value="EM"/>
    <property type="resolution" value="7.20 A"/>
    <property type="chains" value="2=1-462"/>
</dbReference>
<dbReference type="PDB" id="5IY7">
    <property type="method" value="EM"/>
    <property type="resolution" value="8.60 A"/>
    <property type="chains" value="2=1-462"/>
</dbReference>
<dbReference type="PDB" id="5IY8">
    <property type="method" value="EM"/>
    <property type="resolution" value="7.90 A"/>
    <property type="chains" value="2=1-462"/>
</dbReference>
<dbReference type="PDB" id="5IY9">
    <property type="method" value="EM"/>
    <property type="resolution" value="6.30 A"/>
    <property type="chains" value="2=1-462"/>
</dbReference>
<dbReference type="PDB" id="5OF4">
    <property type="method" value="EM"/>
    <property type="resolution" value="4.40 A"/>
    <property type="chains" value="D=383-462"/>
</dbReference>
<dbReference type="PDB" id="6NMI">
    <property type="method" value="EM"/>
    <property type="resolution" value="3.70 A"/>
    <property type="chains" value="D=1-462"/>
</dbReference>
<dbReference type="PDB" id="6O9L">
    <property type="method" value="EM"/>
    <property type="resolution" value="7.20 A"/>
    <property type="chains" value="2=1-462"/>
</dbReference>
<dbReference type="PDB" id="6O9M">
    <property type="method" value="EM"/>
    <property type="resolution" value="4.40 A"/>
    <property type="chains" value="2=1-462"/>
</dbReference>
<dbReference type="PDB" id="6RO4">
    <property type="method" value="EM"/>
    <property type="resolution" value="3.50 A"/>
    <property type="chains" value="C=1-462"/>
</dbReference>
<dbReference type="PDB" id="7AD8">
    <property type="method" value="EM"/>
    <property type="resolution" value="3.50 A"/>
    <property type="chains" value="C=1-462"/>
</dbReference>
<dbReference type="PDB" id="7EGB">
    <property type="method" value="EM"/>
    <property type="resolution" value="3.30 A"/>
    <property type="chains" value="4=1-462"/>
</dbReference>
<dbReference type="PDB" id="7EGC">
    <property type="method" value="EM"/>
    <property type="resolution" value="3.90 A"/>
    <property type="chains" value="4=1-462"/>
</dbReference>
<dbReference type="PDB" id="7ENA">
    <property type="method" value="EM"/>
    <property type="resolution" value="4.07 A"/>
    <property type="chains" value="4=1-462"/>
</dbReference>
<dbReference type="PDB" id="7ENC">
    <property type="method" value="EM"/>
    <property type="resolution" value="4.13 A"/>
    <property type="chains" value="4=1-462"/>
</dbReference>
<dbReference type="PDB" id="7LBM">
    <property type="method" value="EM"/>
    <property type="resolution" value="4.80 A"/>
    <property type="chains" value="Z=1-462"/>
</dbReference>
<dbReference type="PDB" id="7NVR">
    <property type="method" value="EM"/>
    <property type="resolution" value="4.50 A"/>
    <property type="chains" value="2=1-462"/>
</dbReference>
<dbReference type="PDB" id="7NVV">
    <property type="method" value="EM"/>
    <property type="resolution" value="2.90 A"/>
    <property type="chains" value="2=1-462"/>
</dbReference>
<dbReference type="PDB" id="7NVW">
    <property type="method" value="EM"/>
    <property type="resolution" value="4.30 A"/>
    <property type="chains" value="2=1-462"/>
</dbReference>
<dbReference type="PDB" id="7NVX">
    <property type="method" value="EM"/>
    <property type="resolution" value="3.90 A"/>
    <property type="chains" value="2=1-462"/>
</dbReference>
<dbReference type="PDB" id="7NVY">
    <property type="method" value="EM"/>
    <property type="resolution" value="7.30 A"/>
    <property type="chains" value="2=1-462"/>
</dbReference>
<dbReference type="PDB" id="7NVZ">
    <property type="method" value="EM"/>
    <property type="resolution" value="7.20 A"/>
    <property type="chains" value="2=1-462"/>
</dbReference>
<dbReference type="PDB" id="7NW0">
    <property type="method" value="EM"/>
    <property type="resolution" value="6.60 A"/>
    <property type="chains" value="2=1-462"/>
</dbReference>
<dbReference type="PDB" id="8BVW">
    <property type="method" value="EM"/>
    <property type="resolution" value="4.00 A"/>
    <property type="chains" value="3=1-462"/>
</dbReference>
<dbReference type="PDB" id="8BYQ">
    <property type="method" value="EM"/>
    <property type="resolution" value="4.10 A"/>
    <property type="chains" value="3=1-462"/>
</dbReference>
<dbReference type="PDB" id="8EBS">
    <property type="method" value="EM"/>
    <property type="resolution" value="4.00 A"/>
    <property type="chains" value="D=1-462"/>
</dbReference>
<dbReference type="PDB" id="8EBT">
    <property type="method" value="EM"/>
    <property type="resolution" value="3.90 A"/>
    <property type="chains" value="D=17-462"/>
</dbReference>
<dbReference type="PDB" id="8EBU">
    <property type="method" value="EM"/>
    <property type="resolution" value="3.30 A"/>
    <property type="chains" value="D=1-462"/>
</dbReference>
<dbReference type="PDB" id="8EBV">
    <property type="method" value="EM"/>
    <property type="resolution" value="7.10 A"/>
    <property type="chains" value="D=1-462"/>
</dbReference>
<dbReference type="PDB" id="8EBW">
    <property type="method" value="EM"/>
    <property type="resolution" value="5.60 A"/>
    <property type="chains" value="D=1-462"/>
</dbReference>
<dbReference type="PDB" id="8EBX">
    <property type="method" value="EM"/>
    <property type="resolution" value="3.60 A"/>
    <property type="chains" value="D=1-462"/>
</dbReference>
<dbReference type="PDB" id="8EBY">
    <property type="method" value="EM"/>
    <property type="resolution" value="3.60 A"/>
    <property type="chains" value="D=1-462"/>
</dbReference>
<dbReference type="PDB" id="8GXQ">
    <property type="method" value="EM"/>
    <property type="resolution" value="5.04 A"/>
    <property type="chains" value="HC=1-462"/>
</dbReference>
<dbReference type="PDB" id="8GXS">
    <property type="method" value="EM"/>
    <property type="resolution" value="4.16 A"/>
    <property type="chains" value="HC=1-462"/>
</dbReference>
<dbReference type="PDB" id="8WAK">
    <property type="method" value="EM"/>
    <property type="resolution" value="5.47 A"/>
    <property type="chains" value="4=1-462"/>
</dbReference>
<dbReference type="PDB" id="8WAL">
    <property type="method" value="EM"/>
    <property type="resolution" value="8.52 A"/>
    <property type="chains" value="4=1-462"/>
</dbReference>
<dbReference type="PDB" id="8WAN">
    <property type="method" value="EM"/>
    <property type="resolution" value="6.07 A"/>
    <property type="chains" value="4=1-462"/>
</dbReference>
<dbReference type="PDB" id="8WAO">
    <property type="method" value="EM"/>
    <property type="resolution" value="6.40 A"/>
    <property type="chains" value="4=1-462"/>
</dbReference>
<dbReference type="PDB" id="8WAP">
    <property type="method" value="EM"/>
    <property type="resolution" value="5.85 A"/>
    <property type="chains" value="4=1-462"/>
</dbReference>
<dbReference type="PDB" id="8WAQ">
    <property type="method" value="EM"/>
    <property type="resolution" value="6.29 A"/>
    <property type="chains" value="4=1-462"/>
</dbReference>
<dbReference type="PDB" id="8WAR">
    <property type="method" value="EM"/>
    <property type="resolution" value="7.20 A"/>
    <property type="chains" value="4=1-462"/>
</dbReference>
<dbReference type="PDB" id="8WAS">
    <property type="method" value="EM"/>
    <property type="resolution" value="6.13 A"/>
    <property type="chains" value="4=1-462"/>
</dbReference>
<dbReference type="PDBsum" id="5IVW"/>
<dbReference type="PDBsum" id="5IY6"/>
<dbReference type="PDBsum" id="5IY7"/>
<dbReference type="PDBsum" id="5IY8"/>
<dbReference type="PDBsum" id="5IY9"/>
<dbReference type="PDBsum" id="5OF4"/>
<dbReference type="PDBsum" id="6NMI"/>
<dbReference type="PDBsum" id="6O9L"/>
<dbReference type="PDBsum" id="6O9M"/>
<dbReference type="PDBsum" id="6RO4"/>
<dbReference type="PDBsum" id="7AD8"/>
<dbReference type="PDBsum" id="7EGB"/>
<dbReference type="PDBsum" id="7EGC"/>
<dbReference type="PDBsum" id="7ENA"/>
<dbReference type="PDBsum" id="7ENC"/>
<dbReference type="PDBsum" id="7LBM"/>
<dbReference type="PDBsum" id="7NVR"/>
<dbReference type="PDBsum" id="7NVV"/>
<dbReference type="PDBsum" id="7NVW"/>
<dbReference type="PDBsum" id="7NVX"/>
<dbReference type="PDBsum" id="7NVY"/>
<dbReference type="PDBsum" id="7NVZ"/>
<dbReference type="PDBsum" id="7NW0"/>
<dbReference type="PDBsum" id="8BVW"/>
<dbReference type="PDBsum" id="8BYQ"/>
<dbReference type="PDBsum" id="8EBS"/>
<dbReference type="PDBsum" id="8EBT"/>
<dbReference type="PDBsum" id="8EBU"/>
<dbReference type="PDBsum" id="8EBV"/>
<dbReference type="PDBsum" id="8EBW"/>
<dbReference type="PDBsum" id="8EBX"/>
<dbReference type="PDBsum" id="8EBY"/>
<dbReference type="PDBsum" id="8GXQ"/>
<dbReference type="PDBsum" id="8GXS"/>
<dbReference type="PDBsum" id="8WAK"/>
<dbReference type="PDBsum" id="8WAL"/>
<dbReference type="PDBsum" id="8WAN"/>
<dbReference type="PDBsum" id="8WAO"/>
<dbReference type="PDBsum" id="8WAP"/>
<dbReference type="PDBsum" id="8WAQ"/>
<dbReference type="PDBsum" id="8WAR"/>
<dbReference type="PDBsum" id="8WAS"/>
<dbReference type="EMDB" id="EMD-0452"/>
<dbReference type="EMDB" id="EMD-12610"/>
<dbReference type="EMDB" id="EMD-12614"/>
<dbReference type="EMDB" id="EMD-12615"/>
<dbReference type="EMDB" id="EMD-12616"/>
<dbReference type="EMDB" id="EMD-12617"/>
<dbReference type="EMDB" id="EMD-12618"/>
<dbReference type="EMDB" id="EMD-12619"/>
<dbReference type="EMDB" id="EMD-16274"/>
<dbReference type="EMDB" id="EMD-16331"/>
<dbReference type="EMDB" id="EMD-23255"/>
<dbReference type="EMDB" id="EMD-27996"/>
<dbReference type="EMDB" id="EMD-27997"/>
<dbReference type="EMDB" id="EMD-27998"/>
<dbReference type="EMDB" id="EMD-27999"/>
<dbReference type="EMDB" id="EMD-28000"/>
<dbReference type="EMDB" id="EMD-28001"/>
<dbReference type="EMDB" id="EMD-28002"/>
<dbReference type="EMDB" id="EMD-29673"/>
<dbReference type="EMDB" id="EMD-29674"/>
<dbReference type="EMDB" id="EMD-31111"/>
<dbReference type="EMDB" id="EMD-31112"/>
<dbReference type="EMDB" id="EMD-31204"/>
<dbReference type="EMDB" id="EMD-31207"/>
<dbReference type="EMDB" id="EMD-34359"/>
<dbReference type="EMDB" id="EMD-34360"/>
<dbReference type="EMDB" id="EMD-37395"/>
<dbReference type="EMDB" id="EMD-37396"/>
<dbReference type="EMDB" id="EMD-37398"/>
<dbReference type="EMDB" id="EMD-37399"/>
<dbReference type="EMDB" id="EMD-37400"/>
<dbReference type="EMDB" id="EMD-37401"/>
<dbReference type="EMDB" id="EMD-37402"/>
<dbReference type="EMDB" id="EMD-37403"/>
<dbReference type="EMDB" id="EMD-3802"/>
<dbReference type="EMDB" id="EMD-4970"/>
<dbReference type="EMDB" id="EMD-8131"/>
<dbReference type="EMDB" id="EMD-8132"/>
<dbReference type="EMDB" id="EMD-8133"/>
<dbReference type="EMDB" id="EMD-8134"/>
<dbReference type="SMR" id="Q92759"/>
<dbReference type="BioGRID" id="109223">
    <property type="interactions" value="115"/>
</dbReference>
<dbReference type="ComplexPortal" id="CPX-2395">
    <property type="entry name" value="General transcription factor TFIIH complex"/>
</dbReference>
<dbReference type="CORUM" id="Q92759"/>
<dbReference type="DIP" id="DIP-48376N"/>
<dbReference type="FunCoup" id="Q92759">
    <property type="interactions" value="1457"/>
</dbReference>
<dbReference type="IntAct" id="Q92759">
    <property type="interactions" value="37"/>
</dbReference>
<dbReference type="MINT" id="Q92759"/>
<dbReference type="STRING" id="9606.ENSP00000259895"/>
<dbReference type="iPTMnet" id="Q92759"/>
<dbReference type="PhosphoSitePlus" id="Q92759"/>
<dbReference type="BioMuta" id="GTF2H4"/>
<dbReference type="DMDM" id="17380328"/>
<dbReference type="jPOST" id="Q92759"/>
<dbReference type="MassIVE" id="Q92759"/>
<dbReference type="PaxDb" id="9606-ENSP00000259895"/>
<dbReference type="PeptideAtlas" id="Q92759"/>
<dbReference type="ProteomicsDB" id="5110"/>
<dbReference type="ProteomicsDB" id="75447">
    <molecule id="Q92759-1"/>
</dbReference>
<dbReference type="Pumba" id="Q92759"/>
<dbReference type="TopDownProteomics" id="Q92759-1">
    <molecule id="Q92759-1"/>
</dbReference>
<dbReference type="Antibodypedia" id="48243">
    <property type="antibodies" value="185 antibodies from 25 providers"/>
</dbReference>
<dbReference type="DNASU" id="2968"/>
<dbReference type="Ensembl" id="ENST00000259895.9">
    <molecule id="Q92759-1"/>
    <property type="protein sequence ID" value="ENSP00000259895.4"/>
    <property type="gene ID" value="ENSG00000213780.11"/>
</dbReference>
<dbReference type="Ensembl" id="ENST00000376316.5">
    <molecule id="Q92759-1"/>
    <property type="protein sequence ID" value="ENSP00000365493.2"/>
    <property type="gene ID" value="ENSG00000213780.11"/>
</dbReference>
<dbReference type="Ensembl" id="ENST00000376326.8">
    <molecule id="Q92759-1"/>
    <property type="protein sequence ID" value="ENSP00000365504.4"/>
    <property type="gene ID" value="ENSG00000221974.11"/>
</dbReference>
<dbReference type="Ensembl" id="ENST00000400450.1">
    <molecule id="Q92759-1"/>
    <property type="protein sequence ID" value="ENSP00000383300.1"/>
    <property type="gene ID" value="ENSG00000221974.11"/>
</dbReference>
<dbReference type="Ensembl" id="ENST00000413314.6">
    <molecule id="Q92759-1"/>
    <property type="protein sequence ID" value="ENSP00000396251.2"/>
    <property type="gene ID" value="ENSG00000236895.10"/>
</dbReference>
<dbReference type="Ensembl" id="ENST00000416773.5">
    <molecule id="Q92759-1"/>
    <property type="protein sequence ID" value="ENSP00000399554.1"/>
    <property type="gene ID" value="ENSG00000234370.10"/>
</dbReference>
<dbReference type="Ensembl" id="ENST00000423881.5">
    <molecule id="Q92759-1"/>
    <property type="protein sequence ID" value="ENSP00000409483.1"/>
    <property type="gene ID" value="ENSG00000236895.10"/>
</dbReference>
<dbReference type="Ensembl" id="ENST00000434226.6">
    <molecule id="Q92759-1"/>
    <property type="protein sequence ID" value="ENSP00000403156.2"/>
    <property type="gene ID" value="ENSG00000234370.10"/>
</dbReference>
<dbReference type="Ensembl" id="ENST00000435498.5">
    <molecule id="Q92759-1"/>
    <property type="protein sequence ID" value="ENSP00000388227.1"/>
    <property type="gene ID" value="ENSG00000233149.10"/>
</dbReference>
<dbReference type="Ensembl" id="ENST00000438348.5">
    <molecule id="Q92759-1"/>
    <property type="protein sequence ID" value="ENSP00000387980.1"/>
    <property type="gene ID" value="ENSG00000226384.10"/>
</dbReference>
<dbReference type="Ensembl" id="ENST00000440824.6">
    <molecule id="Q92759-1"/>
    <property type="protein sequence ID" value="ENSP00000401105.2"/>
    <property type="gene ID" value="ENSG00000226384.10"/>
</dbReference>
<dbReference type="Ensembl" id="ENST00000456968.6">
    <molecule id="Q92759-1"/>
    <property type="protein sequence ID" value="ENSP00000395497.2"/>
    <property type="gene ID" value="ENSG00000233149.10"/>
</dbReference>
<dbReference type="GeneID" id="2968"/>
<dbReference type="KEGG" id="hsa:2968"/>
<dbReference type="MANE-Select" id="ENST00000259895.9">
    <property type="protein sequence ID" value="ENSP00000259895.4"/>
    <property type="RefSeq nucleotide sequence ID" value="NM_001517.5"/>
    <property type="RefSeq protein sequence ID" value="NP_001508.1"/>
</dbReference>
<dbReference type="UCSC" id="uc003nsa.2">
    <molecule id="Q92759-1"/>
    <property type="organism name" value="human"/>
</dbReference>
<dbReference type="AGR" id="HGNC:4658"/>
<dbReference type="CTD" id="2968"/>
<dbReference type="DisGeNET" id="2968"/>
<dbReference type="GeneCards" id="GTF2H4"/>
<dbReference type="HGNC" id="HGNC:4658">
    <property type="gene designation" value="GTF2H4"/>
</dbReference>
<dbReference type="HPA" id="ENSG00000213780">
    <property type="expression patterns" value="Low tissue specificity"/>
</dbReference>
<dbReference type="MIM" id="601760">
    <property type="type" value="gene"/>
</dbReference>
<dbReference type="neXtProt" id="NX_Q92759"/>
<dbReference type="OpenTargets" id="ENSG00000213780"/>
<dbReference type="PharmGKB" id="PA29044"/>
<dbReference type="VEuPathDB" id="HostDB:ENSG00000213780"/>
<dbReference type="eggNOG" id="KOG3471">
    <property type="taxonomic scope" value="Eukaryota"/>
</dbReference>
<dbReference type="GeneTree" id="ENSGT00390000014159"/>
<dbReference type="HOGENOM" id="CLU_027280_4_0_1"/>
<dbReference type="InParanoid" id="Q92759"/>
<dbReference type="OMA" id="KGFIIIE"/>
<dbReference type="OrthoDB" id="364513at2759"/>
<dbReference type="PAN-GO" id="Q92759">
    <property type="GO annotations" value="5 GO annotations based on evolutionary models"/>
</dbReference>
<dbReference type="PhylomeDB" id="Q92759"/>
<dbReference type="TreeFam" id="TF300879"/>
<dbReference type="PathwayCommons" id="Q92759"/>
<dbReference type="Reactome" id="R-HSA-112382">
    <property type="pathway name" value="Formation of RNA Pol II elongation complex"/>
</dbReference>
<dbReference type="Reactome" id="R-HSA-113418">
    <property type="pathway name" value="Formation of the Early Elongation Complex"/>
</dbReference>
<dbReference type="Reactome" id="R-HSA-167152">
    <property type="pathway name" value="Formation of HIV elongation complex in the absence of HIV Tat"/>
</dbReference>
<dbReference type="Reactome" id="R-HSA-167158">
    <property type="pathway name" value="Formation of the HIV-1 Early Elongation Complex"/>
</dbReference>
<dbReference type="Reactome" id="R-HSA-167160">
    <property type="pathway name" value="RNA Pol II CTD phosphorylation and interaction with CE during HIV infection"/>
</dbReference>
<dbReference type="Reactome" id="R-HSA-167161">
    <property type="pathway name" value="HIV Transcription Initiation"/>
</dbReference>
<dbReference type="Reactome" id="R-HSA-167162">
    <property type="pathway name" value="RNA Polymerase II HIV Promoter Escape"/>
</dbReference>
<dbReference type="Reactome" id="R-HSA-167172">
    <property type="pathway name" value="Transcription of the HIV genome"/>
</dbReference>
<dbReference type="Reactome" id="R-HSA-167200">
    <property type="pathway name" value="Formation of HIV-1 elongation complex containing HIV-1 Tat"/>
</dbReference>
<dbReference type="Reactome" id="R-HSA-167246">
    <property type="pathway name" value="Tat-mediated elongation of the HIV-1 transcript"/>
</dbReference>
<dbReference type="Reactome" id="R-HSA-427413">
    <property type="pathway name" value="NoRC negatively regulates rRNA expression"/>
</dbReference>
<dbReference type="Reactome" id="R-HSA-5696395">
    <property type="pathway name" value="Formation of Incision Complex in GG-NER"/>
</dbReference>
<dbReference type="Reactome" id="R-HSA-5696400">
    <property type="pathway name" value="Dual Incision in GG-NER"/>
</dbReference>
<dbReference type="Reactome" id="R-HSA-674695">
    <property type="pathway name" value="RNA Polymerase II Pre-transcription Events"/>
</dbReference>
<dbReference type="Reactome" id="R-HSA-6781823">
    <property type="pathway name" value="Formation of TC-NER Pre-Incision Complex"/>
</dbReference>
<dbReference type="Reactome" id="R-HSA-6781827">
    <property type="pathway name" value="Transcription-Coupled Nucleotide Excision Repair (TC-NER)"/>
</dbReference>
<dbReference type="Reactome" id="R-HSA-6782135">
    <property type="pathway name" value="Dual incision in TC-NER"/>
</dbReference>
<dbReference type="Reactome" id="R-HSA-6782210">
    <property type="pathway name" value="Gap-filling DNA repair synthesis and ligation in TC-NER"/>
</dbReference>
<dbReference type="Reactome" id="R-HSA-6796648">
    <property type="pathway name" value="TP53 Regulates Transcription of DNA Repair Genes"/>
</dbReference>
<dbReference type="Reactome" id="R-HSA-72086">
    <property type="pathway name" value="mRNA Capping"/>
</dbReference>
<dbReference type="Reactome" id="R-HSA-73762">
    <property type="pathway name" value="RNA Polymerase I Transcription Initiation"/>
</dbReference>
<dbReference type="Reactome" id="R-HSA-73772">
    <property type="pathway name" value="RNA Polymerase I Promoter Escape"/>
</dbReference>
<dbReference type="Reactome" id="R-HSA-73776">
    <property type="pathway name" value="RNA Polymerase II Promoter Escape"/>
</dbReference>
<dbReference type="Reactome" id="R-HSA-73779">
    <property type="pathway name" value="RNA Polymerase II Transcription Pre-Initiation And Promoter Opening"/>
</dbReference>
<dbReference type="Reactome" id="R-HSA-73863">
    <property type="pathway name" value="RNA Polymerase I Transcription Termination"/>
</dbReference>
<dbReference type="Reactome" id="R-HSA-75953">
    <property type="pathway name" value="RNA Polymerase II Transcription Initiation"/>
</dbReference>
<dbReference type="Reactome" id="R-HSA-75955">
    <property type="pathway name" value="RNA Polymerase II Transcription Elongation"/>
</dbReference>
<dbReference type="Reactome" id="R-HSA-76042">
    <property type="pathway name" value="RNA Polymerase II Transcription Initiation And Promoter Clearance"/>
</dbReference>
<dbReference type="Reactome" id="R-HSA-77075">
    <property type="pathway name" value="RNA Pol II CTD phosphorylation and interaction with CE"/>
</dbReference>
<dbReference type="SignaLink" id="Q92759"/>
<dbReference type="SIGNOR" id="Q92759"/>
<dbReference type="BioGRID-ORCS" id="2968">
    <property type="hits" value="586 hits in 1171 CRISPR screens"/>
</dbReference>
<dbReference type="CD-CODE" id="91857CE7">
    <property type="entry name" value="Nucleolus"/>
</dbReference>
<dbReference type="ChiTaRS" id="GTF2H4">
    <property type="organism name" value="human"/>
</dbReference>
<dbReference type="EvolutionaryTrace" id="Q92759"/>
<dbReference type="GeneWiki" id="GTF2H4"/>
<dbReference type="GenomeRNAi" id="2968"/>
<dbReference type="Pharos" id="Q92759">
    <property type="development level" value="Tbio"/>
</dbReference>
<dbReference type="PRO" id="PR:Q92759"/>
<dbReference type="Proteomes" id="UP000005640">
    <property type="component" value="Chromosome 6"/>
</dbReference>
<dbReference type="RNAct" id="Q92759">
    <property type="molecule type" value="protein"/>
</dbReference>
<dbReference type="Bgee" id="ENSG00000213780">
    <property type="expression patterns" value="Expressed in right lobe of liver and 97 other cell types or tissues"/>
</dbReference>
<dbReference type="ExpressionAtlas" id="Q92759">
    <property type="expression patterns" value="baseline and differential"/>
</dbReference>
<dbReference type="GO" id="GO:0000438">
    <property type="term" value="C:core TFIIH complex portion of holo TFIIH complex"/>
    <property type="evidence" value="ECO:0000314"/>
    <property type="project" value="UniProtKB"/>
</dbReference>
<dbReference type="GO" id="GO:0016607">
    <property type="term" value="C:nuclear speck"/>
    <property type="evidence" value="ECO:0000314"/>
    <property type="project" value="HPA"/>
</dbReference>
<dbReference type="GO" id="GO:0005654">
    <property type="term" value="C:nucleoplasm"/>
    <property type="evidence" value="ECO:0000304"/>
    <property type="project" value="Reactome"/>
</dbReference>
<dbReference type="GO" id="GO:0005634">
    <property type="term" value="C:nucleus"/>
    <property type="evidence" value="ECO:0000314"/>
    <property type="project" value="UniProtKB"/>
</dbReference>
<dbReference type="GO" id="GO:0005669">
    <property type="term" value="C:transcription factor TFIID complex"/>
    <property type="evidence" value="ECO:0000314"/>
    <property type="project" value="UniProtKB"/>
</dbReference>
<dbReference type="GO" id="GO:0000439">
    <property type="term" value="C:transcription factor TFIIH core complex"/>
    <property type="evidence" value="ECO:0000318"/>
    <property type="project" value="GO_Central"/>
</dbReference>
<dbReference type="GO" id="GO:0005675">
    <property type="term" value="C:transcription factor TFIIH holo complex"/>
    <property type="evidence" value="ECO:0000314"/>
    <property type="project" value="UniProtKB"/>
</dbReference>
<dbReference type="GO" id="GO:0001671">
    <property type="term" value="F:ATPase activator activity"/>
    <property type="evidence" value="ECO:0007669"/>
    <property type="project" value="InterPro"/>
</dbReference>
<dbReference type="GO" id="GO:0003690">
    <property type="term" value="F:double-stranded DNA binding"/>
    <property type="evidence" value="ECO:0000318"/>
    <property type="project" value="GO_Central"/>
</dbReference>
<dbReference type="GO" id="GO:0016251">
    <property type="term" value="F:RNA polymerase II general transcription initiation factor activity"/>
    <property type="evidence" value="ECO:0000314"/>
    <property type="project" value="ARUK-UCL"/>
</dbReference>
<dbReference type="GO" id="GO:0006281">
    <property type="term" value="P:DNA repair"/>
    <property type="evidence" value="ECO:0000304"/>
    <property type="project" value="ProtInc"/>
</dbReference>
<dbReference type="GO" id="GO:0006289">
    <property type="term" value="P:nucleotide-excision repair"/>
    <property type="evidence" value="ECO:0000318"/>
    <property type="project" value="GO_Central"/>
</dbReference>
<dbReference type="GO" id="GO:0006366">
    <property type="term" value="P:transcription by RNA polymerase II"/>
    <property type="evidence" value="ECO:0000314"/>
    <property type="project" value="UniProtKB"/>
</dbReference>
<dbReference type="FunFam" id="3.30.70.2610:FF:000001">
    <property type="entry name" value="General transcription factor IIH subunit 4"/>
    <property type="match status" value="1"/>
</dbReference>
<dbReference type="Gene3D" id="3.30.70.2610">
    <property type="match status" value="1"/>
</dbReference>
<dbReference type="InterPro" id="IPR040662">
    <property type="entry name" value="Tfb2_C"/>
</dbReference>
<dbReference type="InterPro" id="IPR004598">
    <property type="entry name" value="TFIIH_p52/Tfb2"/>
</dbReference>
<dbReference type="NCBIfam" id="TIGR00625">
    <property type="entry name" value="tfb2"/>
    <property type="match status" value="1"/>
</dbReference>
<dbReference type="PANTHER" id="PTHR13152:SF0">
    <property type="entry name" value="GENERAL TRANSCRIPTION FACTOR IIH SUBUNIT 4"/>
    <property type="match status" value="1"/>
</dbReference>
<dbReference type="PANTHER" id="PTHR13152">
    <property type="entry name" value="TFIIH, POLYPEPTIDE 4"/>
    <property type="match status" value="1"/>
</dbReference>
<dbReference type="Pfam" id="PF03849">
    <property type="entry name" value="Tfb2"/>
    <property type="match status" value="1"/>
</dbReference>
<dbReference type="Pfam" id="PF18307">
    <property type="entry name" value="Tfb2_C"/>
    <property type="match status" value="1"/>
</dbReference>